<proteinExistence type="inferred from homology"/>
<organism>
    <name type="scientific">Xanthobacter autotrophicus (strain ATCC BAA-1158 / Py2)</name>
    <dbReference type="NCBI Taxonomy" id="78245"/>
    <lineage>
        <taxon>Bacteria</taxon>
        <taxon>Pseudomonadati</taxon>
        <taxon>Pseudomonadota</taxon>
        <taxon>Alphaproteobacteria</taxon>
        <taxon>Hyphomicrobiales</taxon>
        <taxon>Xanthobacteraceae</taxon>
        <taxon>Xanthobacter</taxon>
    </lineage>
</organism>
<dbReference type="EMBL" id="CP000781">
    <property type="protein sequence ID" value="ABS66921.1"/>
    <property type="molecule type" value="Genomic_DNA"/>
</dbReference>
<dbReference type="SMR" id="A7IFX8"/>
<dbReference type="STRING" id="78245.Xaut_1676"/>
<dbReference type="KEGG" id="xau:Xaut_1676"/>
<dbReference type="eggNOG" id="COG0480">
    <property type="taxonomic scope" value="Bacteria"/>
</dbReference>
<dbReference type="HOGENOM" id="CLU_002794_4_1_5"/>
<dbReference type="OrthoDB" id="9802948at2"/>
<dbReference type="PhylomeDB" id="A7IFX8"/>
<dbReference type="Proteomes" id="UP000002417">
    <property type="component" value="Chromosome"/>
</dbReference>
<dbReference type="GO" id="GO:0005737">
    <property type="term" value="C:cytoplasm"/>
    <property type="evidence" value="ECO:0007669"/>
    <property type="project" value="UniProtKB-SubCell"/>
</dbReference>
<dbReference type="GO" id="GO:0005525">
    <property type="term" value="F:GTP binding"/>
    <property type="evidence" value="ECO:0007669"/>
    <property type="project" value="UniProtKB-UniRule"/>
</dbReference>
<dbReference type="GO" id="GO:0003924">
    <property type="term" value="F:GTPase activity"/>
    <property type="evidence" value="ECO:0007669"/>
    <property type="project" value="InterPro"/>
</dbReference>
<dbReference type="GO" id="GO:0097216">
    <property type="term" value="F:guanosine tetraphosphate binding"/>
    <property type="evidence" value="ECO:0007669"/>
    <property type="project" value="UniProtKB-ARBA"/>
</dbReference>
<dbReference type="GO" id="GO:0003746">
    <property type="term" value="F:translation elongation factor activity"/>
    <property type="evidence" value="ECO:0007669"/>
    <property type="project" value="UniProtKB-UniRule"/>
</dbReference>
<dbReference type="GO" id="GO:0032790">
    <property type="term" value="P:ribosome disassembly"/>
    <property type="evidence" value="ECO:0007669"/>
    <property type="project" value="TreeGrafter"/>
</dbReference>
<dbReference type="CDD" id="cd01886">
    <property type="entry name" value="EF-G"/>
    <property type="match status" value="1"/>
</dbReference>
<dbReference type="CDD" id="cd16262">
    <property type="entry name" value="EFG_III"/>
    <property type="match status" value="1"/>
</dbReference>
<dbReference type="CDD" id="cd01434">
    <property type="entry name" value="EFG_mtEFG1_IV"/>
    <property type="match status" value="1"/>
</dbReference>
<dbReference type="CDD" id="cd03713">
    <property type="entry name" value="EFG_mtEFG_C"/>
    <property type="match status" value="1"/>
</dbReference>
<dbReference type="CDD" id="cd04088">
    <property type="entry name" value="EFG_mtEFG_II"/>
    <property type="match status" value="1"/>
</dbReference>
<dbReference type="FunFam" id="2.40.30.10:FF:000006">
    <property type="entry name" value="Elongation factor G"/>
    <property type="match status" value="1"/>
</dbReference>
<dbReference type="FunFam" id="3.30.230.10:FF:000003">
    <property type="entry name" value="Elongation factor G"/>
    <property type="match status" value="1"/>
</dbReference>
<dbReference type="FunFam" id="3.30.70.240:FF:000001">
    <property type="entry name" value="Elongation factor G"/>
    <property type="match status" value="1"/>
</dbReference>
<dbReference type="FunFam" id="3.30.70.870:FF:000001">
    <property type="entry name" value="Elongation factor G"/>
    <property type="match status" value="1"/>
</dbReference>
<dbReference type="FunFam" id="3.40.50.300:FF:000029">
    <property type="entry name" value="Elongation factor G"/>
    <property type="match status" value="1"/>
</dbReference>
<dbReference type="Gene3D" id="3.30.230.10">
    <property type="match status" value="1"/>
</dbReference>
<dbReference type="Gene3D" id="3.30.70.240">
    <property type="match status" value="1"/>
</dbReference>
<dbReference type="Gene3D" id="3.30.70.870">
    <property type="entry name" value="Elongation Factor G (Translational Gtpase), domain 3"/>
    <property type="match status" value="1"/>
</dbReference>
<dbReference type="Gene3D" id="3.40.50.300">
    <property type="entry name" value="P-loop containing nucleotide triphosphate hydrolases"/>
    <property type="match status" value="1"/>
</dbReference>
<dbReference type="Gene3D" id="2.40.30.10">
    <property type="entry name" value="Translation factors"/>
    <property type="match status" value="1"/>
</dbReference>
<dbReference type="HAMAP" id="MF_00054_B">
    <property type="entry name" value="EF_G_EF_2_B"/>
    <property type="match status" value="1"/>
</dbReference>
<dbReference type="InterPro" id="IPR041095">
    <property type="entry name" value="EFG_II"/>
</dbReference>
<dbReference type="InterPro" id="IPR009022">
    <property type="entry name" value="EFG_III"/>
</dbReference>
<dbReference type="InterPro" id="IPR035647">
    <property type="entry name" value="EFG_III/V"/>
</dbReference>
<dbReference type="InterPro" id="IPR047872">
    <property type="entry name" value="EFG_IV"/>
</dbReference>
<dbReference type="InterPro" id="IPR035649">
    <property type="entry name" value="EFG_V"/>
</dbReference>
<dbReference type="InterPro" id="IPR000640">
    <property type="entry name" value="EFG_V-like"/>
</dbReference>
<dbReference type="InterPro" id="IPR004161">
    <property type="entry name" value="EFTu-like_2"/>
</dbReference>
<dbReference type="InterPro" id="IPR031157">
    <property type="entry name" value="G_TR_CS"/>
</dbReference>
<dbReference type="InterPro" id="IPR027417">
    <property type="entry name" value="P-loop_NTPase"/>
</dbReference>
<dbReference type="InterPro" id="IPR020568">
    <property type="entry name" value="Ribosomal_Su5_D2-typ_SF"/>
</dbReference>
<dbReference type="InterPro" id="IPR014721">
    <property type="entry name" value="Ribsml_uS5_D2-typ_fold_subgr"/>
</dbReference>
<dbReference type="InterPro" id="IPR005225">
    <property type="entry name" value="Small_GTP-bd"/>
</dbReference>
<dbReference type="InterPro" id="IPR000795">
    <property type="entry name" value="T_Tr_GTP-bd_dom"/>
</dbReference>
<dbReference type="InterPro" id="IPR009000">
    <property type="entry name" value="Transl_B-barrel_sf"/>
</dbReference>
<dbReference type="InterPro" id="IPR004540">
    <property type="entry name" value="Transl_elong_EFG/EF2"/>
</dbReference>
<dbReference type="InterPro" id="IPR005517">
    <property type="entry name" value="Transl_elong_EFG/EF2_IV"/>
</dbReference>
<dbReference type="NCBIfam" id="TIGR00484">
    <property type="entry name" value="EF-G"/>
    <property type="match status" value="1"/>
</dbReference>
<dbReference type="NCBIfam" id="NF009379">
    <property type="entry name" value="PRK12740.1-3"/>
    <property type="match status" value="1"/>
</dbReference>
<dbReference type="NCBIfam" id="NF009381">
    <property type="entry name" value="PRK12740.1-5"/>
    <property type="match status" value="1"/>
</dbReference>
<dbReference type="NCBIfam" id="TIGR00231">
    <property type="entry name" value="small_GTP"/>
    <property type="match status" value="1"/>
</dbReference>
<dbReference type="PANTHER" id="PTHR43261:SF1">
    <property type="entry name" value="RIBOSOME-RELEASING FACTOR 2, MITOCHONDRIAL"/>
    <property type="match status" value="1"/>
</dbReference>
<dbReference type="PANTHER" id="PTHR43261">
    <property type="entry name" value="TRANSLATION ELONGATION FACTOR G-RELATED"/>
    <property type="match status" value="1"/>
</dbReference>
<dbReference type="Pfam" id="PF00679">
    <property type="entry name" value="EFG_C"/>
    <property type="match status" value="1"/>
</dbReference>
<dbReference type="Pfam" id="PF14492">
    <property type="entry name" value="EFG_III"/>
    <property type="match status" value="1"/>
</dbReference>
<dbReference type="Pfam" id="PF03764">
    <property type="entry name" value="EFG_IV"/>
    <property type="match status" value="1"/>
</dbReference>
<dbReference type="Pfam" id="PF00009">
    <property type="entry name" value="GTP_EFTU"/>
    <property type="match status" value="1"/>
</dbReference>
<dbReference type="Pfam" id="PF03144">
    <property type="entry name" value="GTP_EFTU_D2"/>
    <property type="match status" value="1"/>
</dbReference>
<dbReference type="PRINTS" id="PR00315">
    <property type="entry name" value="ELONGATNFCT"/>
</dbReference>
<dbReference type="SMART" id="SM00838">
    <property type="entry name" value="EFG_C"/>
    <property type="match status" value="1"/>
</dbReference>
<dbReference type="SMART" id="SM00889">
    <property type="entry name" value="EFG_IV"/>
    <property type="match status" value="1"/>
</dbReference>
<dbReference type="SUPFAM" id="SSF54980">
    <property type="entry name" value="EF-G C-terminal domain-like"/>
    <property type="match status" value="2"/>
</dbReference>
<dbReference type="SUPFAM" id="SSF52540">
    <property type="entry name" value="P-loop containing nucleoside triphosphate hydrolases"/>
    <property type="match status" value="1"/>
</dbReference>
<dbReference type="SUPFAM" id="SSF54211">
    <property type="entry name" value="Ribosomal protein S5 domain 2-like"/>
    <property type="match status" value="1"/>
</dbReference>
<dbReference type="SUPFAM" id="SSF50447">
    <property type="entry name" value="Translation proteins"/>
    <property type="match status" value="1"/>
</dbReference>
<dbReference type="PROSITE" id="PS00301">
    <property type="entry name" value="G_TR_1"/>
    <property type="match status" value="1"/>
</dbReference>
<dbReference type="PROSITE" id="PS51722">
    <property type="entry name" value="G_TR_2"/>
    <property type="match status" value="1"/>
</dbReference>
<reference key="1">
    <citation type="submission" date="2007-07" db="EMBL/GenBank/DDBJ databases">
        <title>Complete sequence of chromosome of Xanthobacter autotrophicus Py2.</title>
        <authorList>
            <consortium name="US DOE Joint Genome Institute"/>
            <person name="Copeland A."/>
            <person name="Lucas S."/>
            <person name="Lapidus A."/>
            <person name="Barry K."/>
            <person name="Glavina del Rio T."/>
            <person name="Hammon N."/>
            <person name="Israni S."/>
            <person name="Dalin E."/>
            <person name="Tice H."/>
            <person name="Pitluck S."/>
            <person name="Sims D."/>
            <person name="Brettin T."/>
            <person name="Bruce D."/>
            <person name="Detter J.C."/>
            <person name="Han C."/>
            <person name="Tapia R."/>
            <person name="Brainard J."/>
            <person name="Schmutz J."/>
            <person name="Larimer F."/>
            <person name="Land M."/>
            <person name="Hauser L."/>
            <person name="Kyrpides N."/>
            <person name="Kim E."/>
            <person name="Ensigns S.A."/>
            <person name="Richardson P."/>
        </authorList>
    </citation>
    <scope>NUCLEOTIDE SEQUENCE [LARGE SCALE GENOMIC DNA]</scope>
    <source>
        <strain>ATCC BAA-1158 / Py2</strain>
    </source>
</reference>
<gene>
    <name evidence="1" type="primary">fusA</name>
    <name type="ordered locus">Xaut_1676</name>
</gene>
<comment type="function">
    <text evidence="1">Catalyzes the GTP-dependent ribosomal translocation step during translation elongation. During this step, the ribosome changes from the pre-translocational (PRE) to the post-translocational (POST) state as the newly formed A-site-bound peptidyl-tRNA and P-site-bound deacylated tRNA move to the P and E sites, respectively. Catalyzes the coordinated movement of the two tRNA molecules, the mRNA and conformational changes in the ribosome.</text>
</comment>
<comment type="subcellular location">
    <subcellularLocation>
        <location evidence="1">Cytoplasm</location>
    </subcellularLocation>
</comment>
<comment type="similarity">
    <text evidence="1">Belongs to the TRAFAC class translation factor GTPase superfamily. Classic translation factor GTPase family. EF-G/EF-2 subfamily.</text>
</comment>
<name>EFG_XANP2</name>
<sequence length="691" mass="75965">MPRTHAIEDYRNFGIMAHIDAGKTTTTERILYYTGKSHKIGEVHDGAATMDWMTQEQERGITITSAATTAIWAGKRLNIIDTPGHVDFTIEVERSLRVLDGAVCVLDGNQGVEPQTETVWRQADKYNVPRIVFVNKMDKIGADFYRCVEMIVDRVAGNPVCCQLPIGSENNFKGVIDLVRMKAVVWEDEALGAKYHDEEIPADLADKAAEYRNKLVEAAVELDDDAMTAYLDGVEPDVATLKSLIRKAVIGRKFNPVFCGSAFKNKGVQPLLDAVVDFLPSPIDRGAIKGIDFKTEEDTVRMPSDDEPTSVLAFKIMDDPFVGTITFCRVYAGKMETGMGLLNSTRDKRERVGRMLLMHANNREDIKEAYAGDIVALAGLKDVRTGDTLCDPAKAVILEKMEFPEPVIEIAIEPKSKADQEKLGIALSKLAAEDPSFRVSTDFESGQTILKGMGELHLDIKVDILKRTYKVDANIGAPQVAYRETITKKYEVDYTHKKQTGGTGQFARVKFIVEPNEVGKGFVFESAIVGGAVPKEYIPGVQKGLESVLGAGVLAGFPVVDVKVQLIDGAFHEVDSSALAFEIASRAAFREALQKGSPVLLEPIMKVEVVTPEDYTGSVIGDLNSRRGQIQGQDMRGNANVVNAMVPLANMFGYVNTLRSFSQGRATFTMQFDHYEQVPSNVAQEVQAKYA</sequence>
<evidence type="ECO:0000255" key="1">
    <source>
        <dbReference type="HAMAP-Rule" id="MF_00054"/>
    </source>
</evidence>
<protein>
    <recommendedName>
        <fullName evidence="1">Elongation factor G</fullName>
        <shortName evidence="1">EF-G</shortName>
    </recommendedName>
</protein>
<keyword id="KW-0963">Cytoplasm</keyword>
<keyword id="KW-0251">Elongation factor</keyword>
<keyword id="KW-0342">GTP-binding</keyword>
<keyword id="KW-0547">Nucleotide-binding</keyword>
<keyword id="KW-0648">Protein biosynthesis</keyword>
<keyword id="KW-1185">Reference proteome</keyword>
<feature type="chain" id="PRO_1000091781" description="Elongation factor G">
    <location>
        <begin position="1"/>
        <end position="691"/>
    </location>
</feature>
<feature type="domain" description="tr-type G">
    <location>
        <begin position="8"/>
        <end position="283"/>
    </location>
</feature>
<feature type="binding site" evidence="1">
    <location>
        <begin position="17"/>
        <end position="24"/>
    </location>
    <ligand>
        <name>GTP</name>
        <dbReference type="ChEBI" id="CHEBI:37565"/>
    </ligand>
</feature>
<feature type="binding site" evidence="1">
    <location>
        <begin position="81"/>
        <end position="85"/>
    </location>
    <ligand>
        <name>GTP</name>
        <dbReference type="ChEBI" id="CHEBI:37565"/>
    </ligand>
</feature>
<feature type="binding site" evidence="1">
    <location>
        <begin position="135"/>
        <end position="138"/>
    </location>
    <ligand>
        <name>GTP</name>
        <dbReference type="ChEBI" id="CHEBI:37565"/>
    </ligand>
</feature>
<accession>A7IFX8</accession>